<keyword id="KW-0413">Isomerase</keyword>
<keyword id="KW-0460">Magnesium</keyword>
<keyword id="KW-0479">Metal-binding</keyword>
<keyword id="KW-0597">Phosphoprotein</keyword>
<dbReference type="EC" id="5.4.2.10" evidence="1"/>
<dbReference type="EMBL" id="CP000943">
    <property type="protein sequence ID" value="ACA17477.1"/>
    <property type="molecule type" value="Genomic_DNA"/>
</dbReference>
<dbReference type="RefSeq" id="WP_012332877.1">
    <property type="nucleotide sequence ID" value="NC_010511.1"/>
</dbReference>
<dbReference type="SMR" id="B0ULF6"/>
<dbReference type="STRING" id="426117.M446_3067"/>
<dbReference type="KEGG" id="met:M446_3067"/>
<dbReference type="eggNOG" id="COG1109">
    <property type="taxonomic scope" value="Bacteria"/>
</dbReference>
<dbReference type="HOGENOM" id="CLU_016950_7_0_5"/>
<dbReference type="GO" id="GO:0005829">
    <property type="term" value="C:cytosol"/>
    <property type="evidence" value="ECO:0007669"/>
    <property type="project" value="TreeGrafter"/>
</dbReference>
<dbReference type="GO" id="GO:0000287">
    <property type="term" value="F:magnesium ion binding"/>
    <property type="evidence" value="ECO:0007669"/>
    <property type="project" value="UniProtKB-UniRule"/>
</dbReference>
<dbReference type="GO" id="GO:0008966">
    <property type="term" value="F:phosphoglucosamine mutase activity"/>
    <property type="evidence" value="ECO:0007669"/>
    <property type="project" value="UniProtKB-UniRule"/>
</dbReference>
<dbReference type="GO" id="GO:0004615">
    <property type="term" value="F:phosphomannomutase activity"/>
    <property type="evidence" value="ECO:0007669"/>
    <property type="project" value="TreeGrafter"/>
</dbReference>
<dbReference type="GO" id="GO:0005975">
    <property type="term" value="P:carbohydrate metabolic process"/>
    <property type="evidence" value="ECO:0007669"/>
    <property type="project" value="InterPro"/>
</dbReference>
<dbReference type="GO" id="GO:0009252">
    <property type="term" value="P:peptidoglycan biosynthetic process"/>
    <property type="evidence" value="ECO:0007669"/>
    <property type="project" value="TreeGrafter"/>
</dbReference>
<dbReference type="GO" id="GO:0006048">
    <property type="term" value="P:UDP-N-acetylglucosamine biosynthetic process"/>
    <property type="evidence" value="ECO:0007669"/>
    <property type="project" value="TreeGrafter"/>
</dbReference>
<dbReference type="CDD" id="cd05802">
    <property type="entry name" value="GlmM"/>
    <property type="match status" value="1"/>
</dbReference>
<dbReference type="FunFam" id="3.40.120.10:FF:000001">
    <property type="entry name" value="Phosphoglucosamine mutase"/>
    <property type="match status" value="1"/>
</dbReference>
<dbReference type="FunFam" id="3.40.120.10:FF:000002">
    <property type="entry name" value="Phosphoglucosamine mutase"/>
    <property type="match status" value="1"/>
</dbReference>
<dbReference type="Gene3D" id="3.40.120.10">
    <property type="entry name" value="Alpha-D-Glucose-1,6-Bisphosphate, subunit A, domain 3"/>
    <property type="match status" value="3"/>
</dbReference>
<dbReference type="Gene3D" id="3.30.310.50">
    <property type="entry name" value="Alpha-D-phosphohexomutase, C-terminal domain"/>
    <property type="match status" value="1"/>
</dbReference>
<dbReference type="HAMAP" id="MF_01554_B">
    <property type="entry name" value="GlmM_B"/>
    <property type="match status" value="1"/>
</dbReference>
<dbReference type="InterPro" id="IPR005844">
    <property type="entry name" value="A-D-PHexomutase_a/b/a-I"/>
</dbReference>
<dbReference type="InterPro" id="IPR016055">
    <property type="entry name" value="A-D-PHexomutase_a/b/a-I/II/III"/>
</dbReference>
<dbReference type="InterPro" id="IPR005845">
    <property type="entry name" value="A-D-PHexomutase_a/b/a-II"/>
</dbReference>
<dbReference type="InterPro" id="IPR005846">
    <property type="entry name" value="A-D-PHexomutase_a/b/a-III"/>
</dbReference>
<dbReference type="InterPro" id="IPR005843">
    <property type="entry name" value="A-D-PHexomutase_C"/>
</dbReference>
<dbReference type="InterPro" id="IPR036900">
    <property type="entry name" value="A-D-PHexomutase_C_sf"/>
</dbReference>
<dbReference type="InterPro" id="IPR016066">
    <property type="entry name" value="A-D-PHexomutase_CS"/>
</dbReference>
<dbReference type="InterPro" id="IPR005841">
    <property type="entry name" value="Alpha-D-phosphohexomutase_SF"/>
</dbReference>
<dbReference type="InterPro" id="IPR006352">
    <property type="entry name" value="GlmM_bact"/>
</dbReference>
<dbReference type="InterPro" id="IPR050060">
    <property type="entry name" value="Phosphoglucosamine_mutase"/>
</dbReference>
<dbReference type="NCBIfam" id="TIGR01455">
    <property type="entry name" value="glmM"/>
    <property type="match status" value="1"/>
</dbReference>
<dbReference type="NCBIfam" id="NF008139">
    <property type="entry name" value="PRK10887.1"/>
    <property type="match status" value="1"/>
</dbReference>
<dbReference type="PANTHER" id="PTHR42946:SF1">
    <property type="entry name" value="PHOSPHOGLUCOMUTASE (ALPHA-D-GLUCOSE-1,6-BISPHOSPHATE-DEPENDENT)"/>
    <property type="match status" value="1"/>
</dbReference>
<dbReference type="PANTHER" id="PTHR42946">
    <property type="entry name" value="PHOSPHOHEXOSE MUTASE"/>
    <property type="match status" value="1"/>
</dbReference>
<dbReference type="Pfam" id="PF02878">
    <property type="entry name" value="PGM_PMM_I"/>
    <property type="match status" value="1"/>
</dbReference>
<dbReference type="Pfam" id="PF02879">
    <property type="entry name" value="PGM_PMM_II"/>
    <property type="match status" value="1"/>
</dbReference>
<dbReference type="Pfam" id="PF02880">
    <property type="entry name" value="PGM_PMM_III"/>
    <property type="match status" value="1"/>
</dbReference>
<dbReference type="Pfam" id="PF00408">
    <property type="entry name" value="PGM_PMM_IV"/>
    <property type="match status" value="1"/>
</dbReference>
<dbReference type="PRINTS" id="PR00509">
    <property type="entry name" value="PGMPMM"/>
</dbReference>
<dbReference type="SUPFAM" id="SSF55957">
    <property type="entry name" value="Phosphoglucomutase, C-terminal domain"/>
    <property type="match status" value="1"/>
</dbReference>
<dbReference type="SUPFAM" id="SSF53738">
    <property type="entry name" value="Phosphoglucomutase, first 3 domains"/>
    <property type="match status" value="3"/>
</dbReference>
<dbReference type="PROSITE" id="PS00710">
    <property type="entry name" value="PGM_PMM"/>
    <property type="match status" value="1"/>
</dbReference>
<comment type="function">
    <text evidence="1">Catalyzes the conversion of glucosamine-6-phosphate to glucosamine-1-phosphate.</text>
</comment>
<comment type="catalytic activity">
    <reaction evidence="1">
        <text>alpha-D-glucosamine 1-phosphate = D-glucosamine 6-phosphate</text>
        <dbReference type="Rhea" id="RHEA:23424"/>
        <dbReference type="ChEBI" id="CHEBI:58516"/>
        <dbReference type="ChEBI" id="CHEBI:58725"/>
        <dbReference type="EC" id="5.4.2.10"/>
    </reaction>
</comment>
<comment type="cofactor">
    <cofactor evidence="1">
        <name>Mg(2+)</name>
        <dbReference type="ChEBI" id="CHEBI:18420"/>
    </cofactor>
    <text evidence="1">Binds 1 Mg(2+) ion per subunit.</text>
</comment>
<comment type="PTM">
    <text evidence="1">Activated by phosphorylation.</text>
</comment>
<comment type="similarity">
    <text evidence="1">Belongs to the phosphohexose mutase family.</text>
</comment>
<gene>
    <name evidence="1" type="primary">glmM</name>
    <name type="ordered locus">M446_3067</name>
</gene>
<organism>
    <name type="scientific">Methylobacterium sp. (strain 4-46)</name>
    <dbReference type="NCBI Taxonomy" id="426117"/>
    <lineage>
        <taxon>Bacteria</taxon>
        <taxon>Pseudomonadati</taxon>
        <taxon>Pseudomonadota</taxon>
        <taxon>Alphaproteobacteria</taxon>
        <taxon>Hyphomicrobiales</taxon>
        <taxon>Methylobacteriaceae</taxon>
        <taxon>Methylobacterium</taxon>
    </lineage>
</organism>
<sequence>MRKYFGTDGIRGRANGVITPELALKVGQAAGLLFQRGDHRHRVVIGKDTRLSGYMIETALVAGFTSVGMDVLLLGPMPTPAVAMLTRSMRADIGVMISASHNPYEDNGIKLFGPDGFKLSDEVEHEIERLLDADLQKRLSGSADLGRAKRIESVHARYIEFAKRTLPRSITLEGLRVVVDCANGAAYRVAPETLWELGAEVIAIGTEPDGFNINRDVGSTAPDALVRKVRELRADIGIALDGDADRVLVVDEKGQRVDGDQLMAVVARSWKEDQRLTQPGIVATIMSNLGLERYLGELGLGLVRTAVGDRYVLEYMREHGYNLGGEQSGHIIMSDYATTGDGLVAALQLLTVVQRQQRPVSEVCHCFDPLPQVLKNVRYRAGEPLRQDSVVTAIEGARQRLGNAGRLVIRPSGTEPVIRVMAEGDNRDLVVEVVDEVVEALRQAAA</sequence>
<name>GLMM_METS4</name>
<evidence type="ECO:0000255" key="1">
    <source>
        <dbReference type="HAMAP-Rule" id="MF_01554"/>
    </source>
</evidence>
<feature type="chain" id="PRO_0000343593" description="Phosphoglucosamine mutase">
    <location>
        <begin position="1"/>
        <end position="446"/>
    </location>
</feature>
<feature type="active site" description="Phosphoserine intermediate" evidence="1">
    <location>
        <position position="100"/>
    </location>
</feature>
<feature type="binding site" description="via phosphate group" evidence="1">
    <location>
        <position position="100"/>
    </location>
    <ligand>
        <name>Mg(2+)</name>
        <dbReference type="ChEBI" id="CHEBI:18420"/>
    </ligand>
</feature>
<feature type="binding site" evidence="1">
    <location>
        <position position="241"/>
    </location>
    <ligand>
        <name>Mg(2+)</name>
        <dbReference type="ChEBI" id="CHEBI:18420"/>
    </ligand>
</feature>
<feature type="binding site" evidence="1">
    <location>
        <position position="243"/>
    </location>
    <ligand>
        <name>Mg(2+)</name>
        <dbReference type="ChEBI" id="CHEBI:18420"/>
    </ligand>
</feature>
<feature type="binding site" evidence="1">
    <location>
        <position position="245"/>
    </location>
    <ligand>
        <name>Mg(2+)</name>
        <dbReference type="ChEBI" id="CHEBI:18420"/>
    </ligand>
</feature>
<feature type="modified residue" description="Phosphoserine" evidence="1">
    <location>
        <position position="100"/>
    </location>
</feature>
<proteinExistence type="inferred from homology"/>
<reference key="1">
    <citation type="submission" date="2008-02" db="EMBL/GenBank/DDBJ databases">
        <title>Complete sequence of chromosome of Methylobacterium sp. 4-46.</title>
        <authorList>
            <consortium name="US DOE Joint Genome Institute"/>
            <person name="Copeland A."/>
            <person name="Lucas S."/>
            <person name="Lapidus A."/>
            <person name="Glavina del Rio T."/>
            <person name="Dalin E."/>
            <person name="Tice H."/>
            <person name="Bruce D."/>
            <person name="Goodwin L."/>
            <person name="Pitluck S."/>
            <person name="Chertkov O."/>
            <person name="Brettin T."/>
            <person name="Detter J.C."/>
            <person name="Han C."/>
            <person name="Kuske C.R."/>
            <person name="Schmutz J."/>
            <person name="Larimer F."/>
            <person name="Land M."/>
            <person name="Hauser L."/>
            <person name="Kyrpides N."/>
            <person name="Ivanova N."/>
            <person name="Marx C.J."/>
            <person name="Richardson P."/>
        </authorList>
    </citation>
    <scope>NUCLEOTIDE SEQUENCE [LARGE SCALE GENOMIC DNA]</scope>
    <source>
        <strain>4-46</strain>
    </source>
</reference>
<protein>
    <recommendedName>
        <fullName evidence="1">Phosphoglucosamine mutase</fullName>
        <ecNumber evidence="1">5.4.2.10</ecNumber>
    </recommendedName>
</protein>
<accession>B0ULF6</accession>